<comment type="function">
    <text>Is able to inhibit all four classes of proteinases by a unique 'trapping' mechanism. This protein has a peptide stretch, called the 'bait region' which contains specific cleavage sites for different proteinases. When a proteinase cleaves the bait region, a conformational change is induced in the protein which traps the proteinase. The entrapped enzyme remains active against low molecular weight substrates (activity against high molecular weight substrates is greatly reduced). Following cleavage in the bait region, a thioester bond is hydrolyzed and mediates the covalent binding of the protein to the proteinase.</text>
</comment>
<comment type="subcellular location">
    <subcellularLocation>
        <location>Secreted</location>
    </subcellularLocation>
</comment>
<comment type="tissue specificity">
    <text evidence="3">Highest expression in liver, medium expression in ovary, heart and stomach. Low expression in lung, kidney and uterus. Protein found in plasma.</text>
</comment>
<comment type="developmental stage">
    <text>Unlike the rat protein, which is an acute phase protein, this protein is always in circulation at high levels.</text>
</comment>
<comment type="similarity">
    <text evidence="6">Belongs to the protease inhibitor I39 (alpha-2-macroglobulin) family.</text>
</comment>
<comment type="sequence caution" evidence="6">
    <conflict type="frameshift">
        <sequence resource="EMBL-CDS" id="AAA39508"/>
    </conflict>
</comment>
<keyword id="KW-0082">Bait region</keyword>
<keyword id="KW-0903">Direct protein sequencing</keyword>
<keyword id="KW-1015">Disulfide bond</keyword>
<keyword id="KW-0325">Glycoprotein</keyword>
<keyword id="KW-0646">Protease inhibitor</keyword>
<keyword id="KW-1185">Reference proteome</keyword>
<keyword id="KW-0964">Secreted</keyword>
<keyword id="KW-0722">Serine protease inhibitor</keyword>
<keyword id="KW-0732">Signal</keyword>
<keyword id="KW-0882">Thioester bond</keyword>
<reference key="1">
    <citation type="journal article" date="1992" name="Eur. J. Biochem.">
        <title>The primary sequence and the subunit structure of mouse alpha-2-macroglobulin, deduced from protein sequencing of the isolated subunits and from molecular cloning of the cDNA.</title>
        <authorList>
            <person name="van Leuven F."/>
            <person name="Torrekens S."/>
            <person name="Overbergh L."/>
            <person name="Lorent K."/>
            <person name="de Strooper B."/>
            <person name="van den Berghe H."/>
        </authorList>
    </citation>
    <scope>NUCLEOTIDE SEQUENCE [MRNA]</scope>
    <scope>PROTEIN SEQUENCE OF 25-44 AND 1240-1259</scope>
    <source>
        <tissue>Liver</tissue>
    </source>
</reference>
<reference key="2">
    <citation type="journal article" date="2009" name="PLoS Biol.">
        <title>Lineage-specific biology revealed by a finished genome assembly of the mouse.</title>
        <authorList>
            <person name="Church D.M."/>
            <person name="Goodstadt L."/>
            <person name="Hillier L.W."/>
            <person name="Zody M.C."/>
            <person name="Goldstein S."/>
            <person name="She X."/>
            <person name="Bult C.J."/>
            <person name="Agarwala R."/>
            <person name="Cherry J.L."/>
            <person name="DiCuccio M."/>
            <person name="Hlavina W."/>
            <person name="Kapustin Y."/>
            <person name="Meric P."/>
            <person name="Maglott D."/>
            <person name="Birtle Z."/>
            <person name="Marques A.C."/>
            <person name="Graves T."/>
            <person name="Zhou S."/>
            <person name="Teague B."/>
            <person name="Potamousis K."/>
            <person name="Churas C."/>
            <person name="Place M."/>
            <person name="Herschleb J."/>
            <person name="Runnheim R."/>
            <person name="Forrest D."/>
            <person name="Amos-Landgraf J."/>
            <person name="Schwartz D.C."/>
            <person name="Cheng Z."/>
            <person name="Lindblad-Toh K."/>
            <person name="Eichler E.E."/>
            <person name="Ponting C.P."/>
        </authorList>
    </citation>
    <scope>NUCLEOTIDE SEQUENCE [LARGE SCALE GENOMIC DNA]</scope>
    <source>
        <strain>C57BL/6J</strain>
    </source>
</reference>
<reference key="3">
    <citation type="journal article" date="2004" name="Genome Res.">
        <title>The status, quality, and expansion of the NIH full-length cDNA project: the Mammalian Gene Collection (MGC).</title>
        <authorList>
            <consortium name="The MGC Project Team"/>
        </authorList>
    </citation>
    <scope>NUCLEOTIDE SEQUENCE [LARGE SCALE MRNA]</scope>
    <source>
        <strain>FVB/N</strain>
        <tissue>Liver</tissue>
    </source>
</reference>
<reference key="4">
    <citation type="journal article" date="1994" name="Genomics">
        <title>Molecular cloning of the mouse gene coding for alpha 2-macroglobulin and targeting of the gene in embryonic stem cells.</title>
        <authorList>
            <person name="Umans L."/>
            <person name="Serneels L."/>
            <person name="Hilliker C."/>
            <person name="Stas L."/>
            <person name="Overbergh L."/>
            <person name="de Strooper B."/>
            <person name="van Leuven F."/>
            <person name="van den Berghe H."/>
        </authorList>
    </citation>
    <scope>NUCLEOTIDE SEQUENCE [MRNA] OF 1-161</scope>
    <source>
        <strain>129/J</strain>
    </source>
</reference>
<reference key="5">
    <citation type="journal article" date="2005" name="Biol. Reprod.">
        <title>Characterization of a murine alpha 2 macroglobulin gene expressed in reproductive and cardiovascular tissue.</title>
        <authorList>
            <person name="He H."/>
            <person name="McCartney D.J."/>
            <person name="Wei Q."/>
            <person name="Esadeg S."/>
            <person name="Zhang J."/>
            <person name="Foster R.A."/>
            <person name="Hayes M.A."/>
            <person name="Tayade C."/>
            <person name="Van Leuven F."/>
            <person name="Croy B.A."/>
        </authorList>
    </citation>
    <scope>TISSUE SPECIFICITY</scope>
    <source>
        <strain>C57BL/6J</strain>
        <tissue>Placenta</tissue>
    </source>
</reference>
<reference key="6">
    <citation type="journal article" date="2006" name="J. Proteome Res.">
        <title>Proteome-wide characterization of N-glycosylation events by diagonal chromatography.</title>
        <authorList>
            <person name="Ghesquiere B."/>
            <person name="Van Damme J."/>
            <person name="Martens L."/>
            <person name="Vandekerckhove J."/>
            <person name="Gevaert K."/>
        </authorList>
    </citation>
    <scope>GLYCOSYLATION [LARGE SCALE ANALYSIS] AT ASN-157; ASN-405; ASN-412; ASN-1003; ASN-1385 AND ASN-1443</scope>
    <source>
        <strain>C57BL/6J</strain>
        <tissue>Plasma</tissue>
    </source>
</reference>
<reference key="7">
    <citation type="journal article" date="2007" name="J. Proteome Res.">
        <title>Enhanced analysis of the mouse plasma proteome using cysteine-containing tryptic glycopeptides.</title>
        <authorList>
            <person name="Bernhard O.K."/>
            <person name="Kapp E.A."/>
            <person name="Simpson R.J."/>
        </authorList>
    </citation>
    <scope>GLYCOSYLATION [LARGE SCALE ANALYSIS] AT ASN-157; ASN-568; ASN-881; ASN-1003; ASN-1385 AND ASN-1443</scope>
    <source>
        <strain>C57BL/6J</strain>
        <tissue>Plasma</tissue>
    </source>
</reference>
<reference key="8">
    <citation type="journal article" date="2010" name="Cell">
        <title>A tissue-specific atlas of mouse protein phosphorylation and expression.</title>
        <authorList>
            <person name="Huttlin E.L."/>
            <person name="Jedrychowski M.P."/>
            <person name="Elias J.E."/>
            <person name="Goswami T."/>
            <person name="Rad R."/>
            <person name="Beausoleil S.A."/>
            <person name="Villen J."/>
            <person name="Haas W."/>
            <person name="Sowa M.E."/>
            <person name="Gygi S.P."/>
        </authorList>
    </citation>
    <scope>IDENTIFICATION BY MASS SPECTROMETRY [LARGE SCALE ANALYSIS]</scope>
    <source>
        <tissue>Brain</tissue>
        <tissue>Brown adipose tissue</tissue>
        <tissue>Heart</tissue>
        <tissue>Kidney</tissue>
        <tissue>Liver</tissue>
        <tissue>Lung</tissue>
        <tissue>Pancreas</tissue>
        <tissue>Spleen</tissue>
        <tissue>Testis</tissue>
    </source>
</reference>
<feature type="signal peptide" evidence="2">
    <location>
        <begin position="1"/>
        <end position="24"/>
    </location>
</feature>
<feature type="chain" id="PRO_0000338413" description="Pregnancy zone protein">
    <location>
        <begin position="25"/>
        <end position="1495"/>
    </location>
</feature>
<feature type="chain" id="PRO_0000000056" description="Alpha-2-macroglobulin 165 kDa subunit">
    <location>
        <begin position="25"/>
        <end position="1239"/>
    </location>
</feature>
<feature type="chain" id="PRO_0000000057" description="Alpha-2-macroglobulin 35 kDa subunit">
    <location>
        <begin position="1240"/>
        <end position="1495"/>
    </location>
</feature>
<feature type="region of interest" description="Bait region">
    <location>
        <begin position="686"/>
        <end position="744"/>
    </location>
</feature>
<feature type="glycosylation site" description="N-linked (GlcNAc...) asparagine" evidence="2">
    <location>
        <position position="55"/>
    </location>
</feature>
<feature type="glycosylation site" description="N-linked (GlcNAc...) asparagine" evidence="4 5">
    <location>
        <position position="157"/>
    </location>
</feature>
<feature type="glycosylation site" description="N-linked (GlcNAc...) asparagine" evidence="2">
    <location>
        <position position="382"/>
    </location>
</feature>
<feature type="glycosylation site" description="N-linked (GlcNAc...) asparagine" evidence="4">
    <location>
        <position position="405"/>
    </location>
</feature>
<feature type="glycosylation site" description="N-linked (GlcNAc...) asparagine" evidence="4">
    <location>
        <position position="412"/>
    </location>
</feature>
<feature type="glycosylation site" description="N-linked (GlcNAc...) asparagine" evidence="5">
    <location>
        <position position="568"/>
    </location>
</feature>
<feature type="glycosylation site" description="N-linked (GlcNAc...) asparagine" evidence="5">
    <location>
        <position position="881"/>
    </location>
</feature>
<feature type="glycosylation site" description="N-linked (GlcNAc...) asparagine" evidence="2">
    <location>
        <position position="942"/>
    </location>
</feature>
<feature type="glycosylation site" description="N-linked (GlcNAc...) asparagine" evidence="4 5">
    <location>
        <position position="1003"/>
    </location>
</feature>
<feature type="glycosylation site" description="N-linked (GlcNAc...) asparagine" evidence="4 5">
    <location>
        <position position="1385"/>
    </location>
</feature>
<feature type="glycosylation site" description="N-linked (GlcNAc...) asparagine" evidence="4 5">
    <location>
        <position position="1443"/>
    </location>
</feature>
<feature type="disulfide bond" evidence="1">
    <location>
        <begin position="48"/>
        <end position="86"/>
    </location>
</feature>
<feature type="disulfide bond" evidence="1">
    <location>
        <begin position="249"/>
        <end position="298"/>
    </location>
</feature>
<feature type="disulfide bond" evidence="1">
    <location>
        <begin position="267"/>
        <end position="286"/>
    </location>
</feature>
<feature type="disulfide bond" description="Interchain (with C-430)" evidence="1">
    <location>
        <position position="277"/>
    </location>
</feature>
<feature type="disulfide bond" description="Interchain (with C-277)" evidence="1">
    <location>
        <position position="430"/>
    </location>
</feature>
<feature type="disulfide bond" evidence="1">
    <location>
        <begin position="469"/>
        <end position="562"/>
    </location>
</feature>
<feature type="disulfide bond" evidence="1">
    <location>
        <begin position="594"/>
        <end position="783"/>
    </location>
</feature>
<feature type="disulfide bond" evidence="1">
    <location>
        <begin position="642"/>
        <end position="689"/>
    </location>
</feature>
<feature type="disulfide bond" evidence="1">
    <location>
        <begin position="833"/>
        <end position="861"/>
    </location>
</feature>
<feature type="disulfide bond" evidence="1">
    <location>
        <begin position="859"/>
        <end position="895"/>
    </location>
</feature>
<feature type="disulfide bond" evidence="1">
    <location>
        <begin position="933"/>
        <end position="1339"/>
    </location>
</feature>
<feature type="disulfide bond" evidence="1">
    <location>
        <begin position="1092"/>
        <end position="1140"/>
    </location>
</feature>
<feature type="cross-link" description="Isoglutamyl cysteine thioester (Cys-Gln)" evidence="1">
    <location>
        <begin position="984"/>
        <end position="987"/>
    </location>
</feature>
<feature type="sequence conflict" description="In Ref. 1; AAA39508, 3; AAH57983 and 4; AAA87890." evidence="6" ref="1 3 4">
    <original>V</original>
    <variation>I</variation>
    <location>
        <position position="43"/>
    </location>
</feature>
<feature type="sequence conflict" description="In Ref. 4; AAA87890." evidence="6" ref="4">
    <original>I</original>
    <variation>V</variation>
    <location>
        <position position="91"/>
    </location>
</feature>
<feature type="sequence conflict" description="In Ref. 4; AAA87890." evidence="6" ref="4">
    <original>VKF</original>
    <variation>GII</variation>
    <location>
        <begin position="142"/>
        <end position="144"/>
    </location>
</feature>
<feature type="sequence conflict" description="In Ref. 4; AAA87890." evidence="6" ref="4">
    <original>FP</original>
    <variation>VS</variation>
    <location>
        <begin position="160"/>
        <end position="161"/>
    </location>
</feature>
<feature type="sequence conflict" description="In Ref. 1; AAA39508." evidence="6" ref="1">
    <original>E</original>
    <variation>A</variation>
    <location>
        <position position="287"/>
    </location>
</feature>
<feature type="sequence conflict" description="In Ref. 1; AAA39508." evidence="6" ref="1">
    <original>R</original>
    <variation>S</variation>
    <location>
        <position position="300"/>
    </location>
</feature>
<feature type="sequence conflict" description="In Ref. 1; AAA39508." evidence="6" ref="1">
    <original>R</original>
    <variation>S</variation>
    <location>
        <position position="311"/>
    </location>
</feature>
<feature type="sequence conflict" description="In Ref. 1; AAA39508." evidence="6" ref="1">
    <original>D</original>
    <variation>T</variation>
    <location>
        <position position="491"/>
    </location>
</feature>
<feature type="sequence conflict" description="In Ref. 1; AAA39508." evidence="6" ref="1">
    <original>F</original>
    <variation>G</variation>
    <location>
        <position position="505"/>
    </location>
</feature>
<feature type="sequence conflict" description="In Ref. 3; AAH57983." evidence="6" ref="3">
    <original>I</original>
    <variation>V</variation>
    <location>
        <position position="541"/>
    </location>
</feature>
<feature type="sequence conflict" description="In Ref. 1; AAA39508." evidence="6" ref="1">
    <original>L</original>
    <variation>S</variation>
    <location>
        <position position="792"/>
    </location>
</feature>
<feature type="sequence conflict" description="In Ref. 1; AAA39508." evidence="6" ref="1">
    <original>A</original>
    <variation>R</variation>
    <location>
        <position position="884"/>
    </location>
</feature>
<feature type="sequence conflict" description="In Ref. 1; AAA39508." evidence="6" ref="1">
    <original>QSP</original>
    <variation>ESQ</variation>
    <location>
        <begin position="890"/>
        <end position="892"/>
    </location>
</feature>
<feature type="sequence conflict" description="In Ref. 1; AAA39508." evidence="6" ref="1">
    <original>W</original>
    <variation>S</variation>
    <location>
        <position position="943"/>
    </location>
</feature>
<feature type="sequence conflict" description="In Ref. 3; AAH57983." evidence="6" ref="3">
    <original>A</original>
    <variation>V</variation>
    <location>
        <position position="1133"/>
    </location>
</feature>
<feature type="sequence conflict" description="In Ref. 1; AAA39508." evidence="6" ref="1">
    <original>HGGFSS</original>
    <variation>DGGLLL</variation>
    <location>
        <begin position="1263"/>
        <end position="1268"/>
    </location>
</feature>
<feature type="sequence conflict" description="In Ref. 1; AAA39508." evidence="6" ref="1">
    <original>A</original>
    <variation>S</variation>
    <location>
        <position position="1284"/>
    </location>
</feature>
<feature type="sequence conflict" description="In Ref. 1; AAA39508." evidence="6" ref="1">
    <original>IE</original>
    <variation>SR</variation>
    <location>
        <begin position="1298"/>
        <end position="1299"/>
    </location>
</feature>
<feature type="sequence conflict" description="In Ref. 1; AAA39508." evidence="6" ref="1">
    <original>G</original>
    <variation>E</variation>
    <location>
        <position position="1375"/>
    </location>
</feature>
<feature type="sequence conflict" description="In Ref. 1; AAA39508." evidence="6" ref="1">
    <original>K</original>
    <variation>R</variation>
    <location>
        <position position="1417"/>
    </location>
</feature>
<name>PZP_MOUSE</name>
<organism>
    <name type="scientific">Mus musculus</name>
    <name type="common">Mouse</name>
    <dbReference type="NCBI Taxonomy" id="10090"/>
    <lineage>
        <taxon>Eukaryota</taxon>
        <taxon>Metazoa</taxon>
        <taxon>Chordata</taxon>
        <taxon>Craniata</taxon>
        <taxon>Vertebrata</taxon>
        <taxon>Euteleostomi</taxon>
        <taxon>Mammalia</taxon>
        <taxon>Eutheria</taxon>
        <taxon>Euarchontoglires</taxon>
        <taxon>Glires</taxon>
        <taxon>Rodentia</taxon>
        <taxon>Myomorpha</taxon>
        <taxon>Muroidea</taxon>
        <taxon>Muridae</taxon>
        <taxon>Murinae</taxon>
        <taxon>Mus</taxon>
        <taxon>Mus</taxon>
    </lineage>
</organism>
<gene>
    <name type="primary">Pzp</name>
    <name type="synonym">A2m</name>
</gene>
<dbReference type="EMBL" id="M93264">
    <property type="protein sequence ID" value="AAA39508.1"/>
    <property type="status" value="ALT_FRAME"/>
    <property type="molecule type" value="mRNA"/>
</dbReference>
<dbReference type="EMBL" id="AC123060">
    <property type="status" value="NOT_ANNOTATED_CDS"/>
    <property type="molecule type" value="Genomic_DNA"/>
</dbReference>
<dbReference type="EMBL" id="BC057983">
    <property type="protein sequence ID" value="AAH57983.1"/>
    <property type="molecule type" value="mRNA"/>
</dbReference>
<dbReference type="EMBL" id="U06977">
    <property type="protein sequence ID" value="AAA87890.1"/>
    <property type="molecule type" value="Genomic_DNA"/>
</dbReference>
<dbReference type="CCDS" id="CCDS39650.1"/>
<dbReference type="PIR" id="S27001">
    <property type="entry name" value="S27001"/>
</dbReference>
<dbReference type="RefSeq" id="NP_031402.3">
    <property type="nucleotide sequence ID" value="NM_007376.4"/>
</dbReference>
<dbReference type="SMR" id="Q61838"/>
<dbReference type="BioGRID" id="197897">
    <property type="interactions" value="4"/>
</dbReference>
<dbReference type="FunCoup" id="Q61838">
    <property type="interactions" value="178"/>
</dbReference>
<dbReference type="IntAct" id="Q61838">
    <property type="interactions" value="4"/>
</dbReference>
<dbReference type="MINT" id="Q61838"/>
<dbReference type="STRING" id="10090.ENSMUSP00000107760"/>
<dbReference type="MEROPS" id="I39.004"/>
<dbReference type="CarbonylDB" id="Q61838"/>
<dbReference type="GlyConnect" id="675">
    <property type="glycosylation" value="9 N-Linked glycans (5 sites)"/>
</dbReference>
<dbReference type="GlyCosmos" id="Q61838">
    <property type="glycosylation" value="11 sites, 14 glycans"/>
</dbReference>
<dbReference type="GlyGen" id="Q61838">
    <property type="glycosylation" value="14 sites, 20 N-linked glycans (7 sites), 1 O-linked glycan (1 site)"/>
</dbReference>
<dbReference type="iPTMnet" id="Q61838"/>
<dbReference type="PhosphoSitePlus" id="Q61838"/>
<dbReference type="SwissPalm" id="Q61838"/>
<dbReference type="CPTAC" id="non-CPTAC-3606"/>
<dbReference type="jPOST" id="Q61838"/>
<dbReference type="PaxDb" id="10090-ENSMUSP00000032510"/>
<dbReference type="PeptideAtlas" id="Q61838"/>
<dbReference type="ProteomicsDB" id="301900"/>
<dbReference type="Pumba" id="Q61838"/>
<dbReference type="Ensembl" id="ENSMUST00000112132.8">
    <property type="protein sequence ID" value="ENSMUSP00000107760.2"/>
    <property type="gene ID" value="ENSMUSG00000030359.15"/>
</dbReference>
<dbReference type="GeneID" id="11287"/>
<dbReference type="KEGG" id="mmu:11287"/>
<dbReference type="UCSC" id="uc009eef.1">
    <property type="organism name" value="mouse"/>
</dbReference>
<dbReference type="AGR" id="MGI:87854"/>
<dbReference type="MGI" id="MGI:87854">
    <property type="gene designation" value="Pzp"/>
</dbReference>
<dbReference type="VEuPathDB" id="HostDB:ENSMUSG00000030359"/>
<dbReference type="eggNOG" id="KOG1366">
    <property type="taxonomic scope" value="Eukaryota"/>
</dbReference>
<dbReference type="GeneTree" id="ENSGT00940000163775"/>
<dbReference type="HOGENOM" id="CLU_001634_0_1_1"/>
<dbReference type="InParanoid" id="Q61838"/>
<dbReference type="OMA" id="NYMSHCI"/>
<dbReference type="OrthoDB" id="9998011at2759"/>
<dbReference type="ChiTaRS" id="Pzp">
    <property type="organism name" value="mouse"/>
</dbReference>
<dbReference type="PRO" id="PR:Q61838"/>
<dbReference type="Proteomes" id="UP000000589">
    <property type="component" value="Chromosome 6"/>
</dbReference>
<dbReference type="RNAct" id="Q61838">
    <property type="molecule type" value="protein"/>
</dbReference>
<dbReference type="Bgee" id="ENSMUSG00000030359">
    <property type="expression patterns" value="Expressed in left lobe of liver and 61 other cell types or tissues"/>
</dbReference>
<dbReference type="ExpressionAtlas" id="Q61838">
    <property type="expression patterns" value="baseline and differential"/>
</dbReference>
<dbReference type="GO" id="GO:0062023">
    <property type="term" value="C:collagen-containing extracellular matrix"/>
    <property type="evidence" value="ECO:0007005"/>
    <property type="project" value="BHF-UCL"/>
</dbReference>
<dbReference type="GO" id="GO:0005576">
    <property type="term" value="C:extracellular region"/>
    <property type="evidence" value="ECO:0000304"/>
    <property type="project" value="MGI"/>
</dbReference>
<dbReference type="GO" id="GO:0005615">
    <property type="term" value="C:extracellular space"/>
    <property type="evidence" value="ECO:0007669"/>
    <property type="project" value="InterPro"/>
</dbReference>
<dbReference type="GO" id="GO:0004866">
    <property type="term" value="F:endopeptidase inhibitor activity"/>
    <property type="evidence" value="ECO:0000314"/>
    <property type="project" value="MGI"/>
</dbReference>
<dbReference type="GO" id="GO:0004867">
    <property type="term" value="F:serine-type endopeptidase inhibitor activity"/>
    <property type="evidence" value="ECO:0007669"/>
    <property type="project" value="UniProtKB-KW"/>
</dbReference>
<dbReference type="GO" id="GO:0007566">
    <property type="term" value="P:embryo implantation"/>
    <property type="evidence" value="ECO:0000316"/>
    <property type="project" value="MGI"/>
</dbReference>
<dbReference type="CDD" id="cd02897">
    <property type="entry name" value="A2M_2"/>
    <property type="match status" value="1"/>
</dbReference>
<dbReference type="FunFam" id="2.60.40.1940:FF:000002">
    <property type="entry name" value="Alpha-2-macroglobulin"/>
    <property type="match status" value="1"/>
</dbReference>
<dbReference type="FunFam" id="2.60.40.10:FF:000312">
    <property type="entry name" value="Alpha-2-macroglobulin like 1"/>
    <property type="match status" value="1"/>
</dbReference>
<dbReference type="FunFam" id="1.50.10.20:FF:000001">
    <property type="entry name" value="CD109 isoform 1"/>
    <property type="match status" value="1"/>
</dbReference>
<dbReference type="FunFam" id="2.60.40.1930:FF:000001">
    <property type="entry name" value="CD109 isoform 3"/>
    <property type="match status" value="1"/>
</dbReference>
<dbReference type="FunFam" id="2.60.40.1930:FF:000002">
    <property type="entry name" value="PZP, alpha-2-macroglobulin like"/>
    <property type="match status" value="1"/>
</dbReference>
<dbReference type="FunFam" id="2.60.40.690:FF:000001">
    <property type="entry name" value="PZP, alpha-2-macroglobulin like"/>
    <property type="match status" value="1"/>
</dbReference>
<dbReference type="Gene3D" id="1.50.10.20">
    <property type="match status" value="1"/>
</dbReference>
<dbReference type="Gene3D" id="2.20.130.20">
    <property type="match status" value="1"/>
</dbReference>
<dbReference type="Gene3D" id="2.60.120.1540">
    <property type="match status" value="1"/>
</dbReference>
<dbReference type="Gene3D" id="2.60.40.1930">
    <property type="match status" value="2"/>
</dbReference>
<dbReference type="Gene3D" id="2.60.40.1940">
    <property type="match status" value="1"/>
</dbReference>
<dbReference type="Gene3D" id="6.20.50.160">
    <property type="match status" value="1"/>
</dbReference>
<dbReference type="Gene3D" id="2.60.40.690">
    <property type="entry name" value="Alpha-macroglobulin, receptor-binding domain"/>
    <property type="match status" value="1"/>
</dbReference>
<dbReference type="Gene3D" id="2.60.40.10">
    <property type="entry name" value="Immunoglobulins"/>
    <property type="match status" value="2"/>
</dbReference>
<dbReference type="InterPro" id="IPR009048">
    <property type="entry name" value="A-macroglobulin_rcpt-bd"/>
</dbReference>
<dbReference type="InterPro" id="IPR036595">
    <property type="entry name" value="A-macroglobulin_rcpt-bd_sf"/>
</dbReference>
<dbReference type="InterPro" id="IPR050473">
    <property type="entry name" value="A2M/Complement_sys"/>
</dbReference>
<dbReference type="InterPro" id="IPR011625">
    <property type="entry name" value="A2M_N_BRD"/>
</dbReference>
<dbReference type="InterPro" id="IPR041813">
    <property type="entry name" value="A2M_TED"/>
</dbReference>
<dbReference type="InterPro" id="IPR047565">
    <property type="entry name" value="Alpha-macroglob_thiol-ester_cl"/>
</dbReference>
<dbReference type="InterPro" id="IPR011626">
    <property type="entry name" value="Alpha-macroglobulin_TED"/>
</dbReference>
<dbReference type="InterPro" id="IPR013783">
    <property type="entry name" value="Ig-like_fold"/>
</dbReference>
<dbReference type="InterPro" id="IPR014756">
    <property type="entry name" value="Ig_E-set"/>
</dbReference>
<dbReference type="InterPro" id="IPR001599">
    <property type="entry name" value="Macroglobln_a2"/>
</dbReference>
<dbReference type="InterPro" id="IPR019742">
    <property type="entry name" value="MacrogloblnA2_CS"/>
</dbReference>
<dbReference type="InterPro" id="IPR002890">
    <property type="entry name" value="MG2"/>
</dbReference>
<dbReference type="InterPro" id="IPR041555">
    <property type="entry name" value="MG3"/>
</dbReference>
<dbReference type="InterPro" id="IPR040839">
    <property type="entry name" value="MG4"/>
</dbReference>
<dbReference type="InterPro" id="IPR008930">
    <property type="entry name" value="Terpenoid_cyclase/PrenylTrfase"/>
</dbReference>
<dbReference type="PANTHER" id="PTHR11412">
    <property type="entry name" value="MACROGLOBULIN / COMPLEMENT"/>
    <property type="match status" value="1"/>
</dbReference>
<dbReference type="PANTHER" id="PTHR11412:SF116">
    <property type="entry name" value="PREGNANCY ZONE PROTEIN"/>
    <property type="match status" value="1"/>
</dbReference>
<dbReference type="Pfam" id="PF00207">
    <property type="entry name" value="A2M"/>
    <property type="match status" value="1"/>
</dbReference>
<dbReference type="Pfam" id="PF07703">
    <property type="entry name" value="A2M_BRD"/>
    <property type="match status" value="1"/>
</dbReference>
<dbReference type="Pfam" id="PF07677">
    <property type="entry name" value="A2M_recep"/>
    <property type="match status" value="1"/>
</dbReference>
<dbReference type="Pfam" id="PF01835">
    <property type="entry name" value="MG2"/>
    <property type="match status" value="1"/>
</dbReference>
<dbReference type="Pfam" id="PF17791">
    <property type="entry name" value="MG3"/>
    <property type="match status" value="1"/>
</dbReference>
<dbReference type="Pfam" id="PF17789">
    <property type="entry name" value="MG4"/>
    <property type="match status" value="1"/>
</dbReference>
<dbReference type="Pfam" id="PF07678">
    <property type="entry name" value="TED_complement"/>
    <property type="match status" value="1"/>
</dbReference>
<dbReference type="SMART" id="SM01360">
    <property type="entry name" value="A2M"/>
    <property type="match status" value="1"/>
</dbReference>
<dbReference type="SMART" id="SM01359">
    <property type="entry name" value="A2M_N_2"/>
    <property type="match status" value="1"/>
</dbReference>
<dbReference type="SMART" id="SM01361">
    <property type="entry name" value="A2M_recep"/>
    <property type="match status" value="1"/>
</dbReference>
<dbReference type="SMART" id="SM01419">
    <property type="entry name" value="Thiol-ester_cl"/>
    <property type="match status" value="1"/>
</dbReference>
<dbReference type="SUPFAM" id="SSF49410">
    <property type="entry name" value="Alpha-macroglobulin receptor domain"/>
    <property type="match status" value="1"/>
</dbReference>
<dbReference type="SUPFAM" id="SSF81296">
    <property type="entry name" value="E set domains"/>
    <property type="match status" value="1"/>
</dbReference>
<dbReference type="SUPFAM" id="SSF48239">
    <property type="entry name" value="Terpenoid cyclases/Protein prenyltransferases"/>
    <property type="match status" value="1"/>
</dbReference>
<dbReference type="PROSITE" id="PS00477">
    <property type="entry name" value="ALPHA_2_MACROGLOBULIN"/>
    <property type="match status" value="1"/>
</dbReference>
<accession>Q61838</accession>
<accession>E9QPW0</accession>
<accession>Q60628</accession>
<accession>Q6PEM2</accession>
<sequence>MRRNQLPTPAFLLLFLLLPRDATTATAKPQYVVLVPSEVYSGVPEKACVSLNHVNETVMLSLTLEYAMQQTKLLTDQAVDKDSFYCSPFTISGSPLPYTFITVEIKGPTQRFIKKKSIQIIKAESPVFVQTDKPIYKPGQIVKFRVVSVDISFRPLNETFPVVYIETPKRNRIFQWQNIHLAGGLHQLSFPLSVEPALGIYKVVVQKDSGKKIEHSFEVKEYVLPKFEVIIKMQKTMAFLEEELPITACGVYTYGKPVPGLVTLRVCRKYSRYRSTCHNQNSMSICEEFSQQADDKGCFRQVVKTKVFQLRQKGHDMKIEVEAKIKEEGTGIELTGIGSCEIANALSKLKFTKVNTNYRPGLPFSGQVLLVDEKGKPIPNKNITSVVSPLGYLSIFTTDEHGLANISIDTSNFTAPFLRVVVTYKQNHVCYDNWWLDEFHTQADHSATLVFSPSQSYIQLELVFGTLACGQTQEIRIHYLLNEDIMKNEKDLTFYYLIKARGSIFNLGSHVLSLEQGNMKGVFSLPIQVEPGMAPEAQLLIYAILPNEELVADAQNFEIEKCFANKVNLSFPSAQSLPASDTHLKVKAAPLSLCALTAVDQSVLLLKPEAKLSPQSIYNLLPGKTVQGAFFGVPVYKDHENCISGEDITHNGIVYTPKHSLGDNDAHSIFQSVGINIFTNSKIHKPRFCQEFQHYPAMGGVAPQALAVAASGPGSSFRAMGVPMMGLDYSDEINQVVEVRETVRKYFPETWIWDLVPLDVSGDGELAVKVPDTITEWKASAFCLSGTTGLGLSSTISLQAFQPFFLELTLPYSVVRGEAFTLKATVLNYMSHCIQIRVDLEISPDFLAVPVGGHENSHCICGNERKTVSWAVTPKSLGEVNFTATAEALQSPELCGNKLTEVPALVHKDTVVKSVIVEPEGIEKEQTYNTLLCPQDTELQDNWSLELPPNVVEGSARATHSVLGDILGSAMQNLQNLLQMPYGCGEQNMVLFVPNIYVLNYLNETQQLTEAIKSKAINYLISGYQRQLNYQHSDGSYSTFGNHGGGNTPGNTWLTAFVLKAFAQAQSHIFIEKTHITNAFNWLSMKQKENGCFQQSGYLLNNAMKGGVDDEVTLSAYITIALLEMPLPVTHSAVRNALFCLETAWASISQSQESHVYTKALLAYAFALAGNKAKRSELLESLNKDAVKEEDSLHWQRPGDVQKVKALSFYQPRAPSAEVEMTAYVLLAYLTSESSRPTRDLSSSDLSTASKIVKWISKQQNSHGGFSSTQDTVVALQALSKYGAATFTRSQKEVLVTIESSGTFSKTFHVNSGNRLLLQEVRLPDLPGNYVTKGSGSGCVYLQTSLKYNILPVADGKAPFALQVNTLPLNFDKAGDHRTFQIRINVSYTGERPSSNMVIVDVKMVSGFIPMKPSVKKLQDQPNIQRTEVNTNHVLIYIEKLTNQTLGFSFAVEQDIPVKNLKPAPIKVYDYYETDEFTVEEYSAPFSDGSEQGNA</sequence>
<evidence type="ECO:0000250" key="1"/>
<evidence type="ECO:0000255" key="2"/>
<evidence type="ECO:0000269" key="3">
    <source>
    </source>
</evidence>
<evidence type="ECO:0000269" key="4">
    <source>
    </source>
</evidence>
<evidence type="ECO:0000269" key="5">
    <source>
    </source>
</evidence>
<evidence type="ECO:0000305" key="6"/>
<proteinExistence type="evidence at protein level"/>
<protein>
    <recommendedName>
        <fullName>Pregnancy zone protein</fullName>
    </recommendedName>
    <alternativeName>
        <fullName>Alpha-2-macroglobulin</fullName>
        <shortName>Alpha-2-M</shortName>
    </alternativeName>
    <component>
        <recommendedName>
            <fullName>Alpha-2-macroglobulin 165 kDa subunit</fullName>
        </recommendedName>
    </component>
    <component>
        <recommendedName>
            <fullName>Alpha-2-macroglobulin 35 kDa subunit</fullName>
        </recommendedName>
    </component>
</protein>